<reference key="1">
    <citation type="journal article" date="2007" name="PLoS Genet.">
        <title>Patterns and implications of gene gain and loss in the evolution of Prochlorococcus.</title>
        <authorList>
            <person name="Kettler G.C."/>
            <person name="Martiny A.C."/>
            <person name="Huang K."/>
            <person name="Zucker J."/>
            <person name="Coleman M.L."/>
            <person name="Rodrigue S."/>
            <person name="Chen F."/>
            <person name="Lapidus A."/>
            <person name="Ferriera S."/>
            <person name="Johnson J."/>
            <person name="Steglich C."/>
            <person name="Church G.M."/>
            <person name="Richardson P."/>
            <person name="Chisholm S.W."/>
        </authorList>
    </citation>
    <scope>NUCLEOTIDE SEQUENCE [LARGE SCALE GENOMIC DNA]</scope>
    <source>
        <strain>AS9601</strain>
    </source>
</reference>
<accession>A2BT35</accession>
<gene>
    <name evidence="1" type="primary">queF</name>
    <name type="ordered locus">A9601_16631</name>
</gene>
<organism>
    <name type="scientific">Prochlorococcus marinus (strain AS9601)</name>
    <dbReference type="NCBI Taxonomy" id="146891"/>
    <lineage>
        <taxon>Bacteria</taxon>
        <taxon>Bacillati</taxon>
        <taxon>Cyanobacteriota</taxon>
        <taxon>Cyanophyceae</taxon>
        <taxon>Synechococcales</taxon>
        <taxon>Prochlorococcaceae</taxon>
        <taxon>Prochlorococcus</taxon>
    </lineage>
</organism>
<comment type="function">
    <text evidence="1">Catalyzes the NADPH-dependent reduction of 7-cyano-7-deazaguanine (preQ0) to 7-aminomethyl-7-deazaguanine (preQ1).</text>
</comment>
<comment type="catalytic activity">
    <reaction evidence="1">
        <text>7-aminomethyl-7-carbaguanine + 2 NADP(+) = 7-cyano-7-deazaguanine + 2 NADPH + 3 H(+)</text>
        <dbReference type="Rhea" id="RHEA:13409"/>
        <dbReference type="ChEBI" id="CHEBI:15378"/>
        <dbReference type="ChEBI" id="CHEBI:45075"/>
        <dbReference type="ChEBI" id="CHEBI:57783"/>
        <dbReference type="ChEBI" id="CHEBI:58349"/>
        <dbReference type="ChEBI" id="CHEBI:58703"/>
        <dbReference type="EC" id="1.7.1.13"/>
    </reaction>
</comment>
<comment type="pathway">
    <text evidence="1">tRNA modification; tRNA-queuosine biosynthesis.</text>
</comment>
<comment type="subcellular location">
    <subcellularLocation>
        <location evidence="1">Cytoplasm</location>
    </subcellularLocation>
</comment>
<comment type="similarity">
    <text evidence="1">Belongs to the GTP cyclohydrolase I family. QueF type 1 subfamily.</text>
</comment>
<sequence>MSTAKLEDSTQRPLYGERIIEESKIICFDNPNKKRIYEISIQLPEFTCKCPFSGYPDFAKLNITYQPNLKVYELKSLKLYINNFRDIKISHEEVVNRIMDDLVNEGLPHWIHLNAAFNPRGNVSMQLDIFSGQKRN</sequence>
<evidence type="ECO:0000255" key="1">
    <source>
        <dbReference type="HAMAP-Rule" id="MF_00818"/>
    </source>
</evidence>
<name>QUEF_PROMS</name>
<feature type="chain" id="PRO_1000062405" description="NADPH-dependent 7-cyano-7-deazaguanine reductase">
    <location>
        <begin position="1"/>
        <end position="136"/>
    </location>
</feature>
<feature type="active site" description="Thioimide intermediate" evidence="1">
    <location>
        <position position="50"/>
    </location>
</feature>
<feature type="active site" description="Proton donor" evidence="1">
    <location>
        <position position="57"/>
    </location>
</feature>
<feature type="binding site" evidence="1">
    <location>
        <begin position="72"/>
        <end position="74"/>
    </location>
    <ligand>
        <name>substrate</name>
    </ligand>
</feature>
<feature type="binding site" evidence="1">
    <location>
        <begin position="91"/>
        <end position="92"/>
    </location>
    <ligand>
        <name>substrate</name>
    </ligand>
</feature>
<proteinExistence type="inferred from homology"/>
<protein>
    <recommendedName>
        <fullName evidence="1">NADPH-dependent 7-cyano-7-deazaguanine reductase</fullName>
        <ecNumber evidence="1">1.7.1.13</ecNumber>
    </recommendedName>
    <alternativeName>
        <fullName evidence="1">7-cyano-7-carbaguanine reductase</fullName>
    </alternativeName>
    <alternativeName>
        <fullName evidence="1">NADPH-dependent nitrile oxidoreductase</fullName>
    </alternativeName>
    <alternativeName>
        <fullName evidence="1">PreQ(0) reductase</fullName>
    </alternativeName>
</protein>
<keyword id="KW-0963">Cytoplasm</keyword>
<keyword id="KW-0521">NADP</keyword>
<keyword id="KW-0560">Oxidoreductase</keyword>
<keyword id="KW-0671">Queuosine biosynthesis</keyword>
<dbReference type="EC" id="1.7.1.13" evidence="1"/>
<dbReference type="EMBL" id="CP000551">
    <property type="protein sequence ID" value="ABM70946.1"/>
    <property type="molecule type" value="Genomic_DNA"/>
</dbReference>
<dbReference type="RefSeq" id="WP_011819075.1">
    <property type="nucleotide sequence ID" value="NC_008816.1"/>
</dbReference>
<dbReference type="SMR" id="A2BT35"/>
<dbReference type="STRING" id="146891.A9601_16631"/>
<dbReference type="KEGG" id="pmb:A9601_16631"/>
<dbReference type="eggNOG" id="COG0780">
    <property type="taxonomic scope" value="Bacteria"/>
</dbReference>
<dbReference type="HOGENOM" id="CLU_102489_1_1_3"/>
<dbReference type="OrthoDB" id="9795077at2"/>
<dbReference type="UniPathway" id="UPA00392"/>
<dbReference type="Proteomes" id="UP000002590">
    <property type="component" value="Chromosome"/>
</dbReference>
<dbReference type="GO" id="GO:0005737">
    <property type="term" value="C:cytoplasm"/>
    <property type="evidence" value="ECO:0007669"/>
    <property type="project" value="UniProtKB-SubCell"/>
</dbReference>
<dbReference type="GO" id="GO:0033739">
    <property type="term" value="F:preQ1 synthase activity"/>
    <property type="evidence" value="ECO:0007669"/>
    <property type="project" value="UniProtKB-UniRule"/>
</dbReference>
<dbReference type="GO" id="GO:0008616">
    <property type="term" value="P:queuosine biosynthetic process"/>
    <property type="evidence" value="ECO:0007669"/>
    <property type="project" value="UniProtKB-UniRule"/>
</dbReference>
<dbReference type="GO" id="GO:0006400">
    <property type="term" value="P:tRNA modification"/>
    <property type="evidence" value="ECO:0007669"/>
    <property type="project" value="UniProtKB-UniRule"/>
</dbReference>
<dbReference type="Gene3D" id="3.30.1130.10">
    <property type="match status" value="1"/>
</dbReference>
<dbReference type="HAMAP" id="MF_00818">
    <property type="entry name" value="QueF_type1"/>
    <property type="match status" value="1"/>
</dbReference>
<dbReference type="InterPro" id="IPR043133">
    <property type="entry name" value="GTP-CH-I_C/QueF"/>
</dbReference>
<dbReference type="InterPro" id="IPR050084">
    <property type="entry name" value="NADPH_dep_7-cyano-7-deazaG_red"/>
</dbReference>
<dbReference type="InterPro" id="IPR029500">
    <property type="entry name" value="QueF"/>
</dbReference>
<dbReference type="InterPro" id="IPR016856">
    <property type="entry name" value="QueF_type1"/>
</dbReference>
<dbReference type="NCBIfam" id="TIGR03139">
    <property type="entry name" value="QueF-II"/>
    <property type="match status" value="1"/>
</dbReference>
<dbReference type="PANTHER" id="PTHR34354">
    <property type="entry name" value="NADPH-DEPENDENT 7-CYANO-7-DEAZAGUANINE REDUCTASE"/>
    <property type="match status" value="1"/>
</dbReference>
<dbReference type="PANTHER" id="PTHR34354:SF1">
    <property type="entry name" value="NADPH-DEPENDENT 7-CYANO-7-DEAZAGUANINE REDUCTASE"/>
    <property type="match status" value="1"/>
</dbReference>
<dbReference type="Pfam" id="PF14489">
    <property type="entry name" value="QueF"/>
    <property type="match status" value="1"/>
</dbReference>
<dbReference type="PIRSF" id="PIRSF027377">
    <property type="entry name" value="Nitrile_oxidored_QueF"/>
    <property type="match status" value="1"/>
</dbReference>
<dbReference type="SUPFAM" id="SSF55620">
    <property type="entry name" value="Tetrahydrobiopterin biosynthesis enzymes-like"/>
    <property type="match status" value="1"/>
</dbReference>